<organism>
    <name type="scientific">Brucella suis biovar 1 (strain 1330)</name>
    <dbReference type="NCBI Taxonomy" id="204722"/>
    <lineage>
        <taxon>Bacteria</taxon>
        <taxon>Pseudomonadati</taxon>
        <taxon>Pseudomonadota</taxon>
        <taxon>Alphaproteobacteria</taxon>
        <taxon>Hyphomicrobiales</taxon>
        <taxon>Brucellaceae</taxon>
        <taxon>Brucella/Ochrobactrum group</taxon>
        <taxon>Brucella</taxon>
    </lineage>
</organism>
<evidence type="ECO:0000255" key="1">
    <source>
        <dbReference type="HAMAP-Rule" id="MF_01456"/>
    </source>
</evidence>
<sequence>MEIGIAHYLTVSAILFTLGVFGIFLNRKNVIVILMSIELILLSVNLNFVAFSSQLGDLVGQVFALFVLTVAAAEAAIGLAILVVFFRNRGSIAVEDVNVMKG</sequence>
<reference key="1">
    <citation type="journal article" date="2002" name="Proc. Natl. Acad. Sci. U.S.A.">
        <title>The Brucella suis genome reveals fundamental similarities between animal and plant pathogens and symbionts.</title>
        <authorList>
            <person name="Paulsen I.T."/>
            <person name="Seshadri R."/>
            <person name="Nelson K.E."/>
            <person name="Eisen J.A."/>
            <person name="Heidelberg J.F."/>
            <person name="Read T.D."/>
            <person name="Dodson R.J."/>
            <person name="Umayam L.A."/>
            <person name="Brinkac L.M."/>
            <person name="Beanan M.J."/>
            <person name="Daugherty S.C."/>
            <person name="DeBoy R.T."/>
            <person name="Durkin A.S."/>
            <person name="Kolonay J.F."/>
            <person name="Madupu R."/>
            <person name="Nelson W.C."/>
            <person name="Ayodeji B."/>
            <person name="Kraul M."/>
            <person name="Shetty J."/>
            <person name="Malek J.A."/>
            <person name="Van Aken S.E."/>
            <person name="Riedmuller S."/>
            <person name="Tettelin H."/>
            <person name="Gill S.R."/>
            <person name="White O."/>
            <person name="Salzberg S.L."/>
            <person name="Hoover D.L."/>
            <person name="Lindler L.E."/>
            <person name="Halling S.M."/>
            <person name="Boyle S.M."/>
            <person name="Fraser C.M."/>
        </authorList>
    </citation>
    <scope>NUCLEOTIDE SEQUENCE [LARGE SCALE GENOMIC DNA]</scope>
    <source>
        <strain>1330</strain>
    </source>
</reference>
<reference key="2">
    <citation type="journal article" date="2011" name="J. Bacteriol.">
        <title>Revised genome sequence of Brucella suis 1330.</title>
        <authorList>
            <person name="Tae H."/>
            <person name="Shallom S."/>
            <person name="Settlage R."/>
            <person name="Preston D."/>
            <person name="Adams L.G."/>
            <person name="Garner H.R."/>
        </authorList>
    </citation>
    <scope>NUCLEOTIDE SEQUENCE [LARGE SCALE GENOMIC DNA]</scope>
    <source>
        <strain>1330</strain>
    </source>
</reference>
<comment type="function">
    <text evidence="1">NDH-1 shuttles electrons from NADH, via FMN and iron-sulfur (Fe-S) centers, to quinones in the respiratory chain. The immediate electron acceptor for the enzyme in this species is believed to be ubiquinone. Couples the redox reaction to proton translocation (for every two electrons transferred, four hydrogen ions are translocated across the cytoplasmic membrane), and thus conserves the redox energy in a proton gradient.</text>
</comment>
<comment type="catalytic activity">
    <reaction evidence="1">
        <text>a quinone + NADH + 5 H(+)(in) = a quinol + NAD(+) + 4 H(+)(out)</text>
        <dbReference type="Rhea" id="RHEA:57888"/>
        <dbReference type="ChEBI" id="CHEBI:15378"/>
        <dbReference type="ChEBI" id="CHEBI:24646"/>
        <dbReference type="ChEBI" id="CHEBI:57540"/>
        <dbReference type="ChEBI" id="CHEBI:57945"/>
        <dbReference type="ChEBI" id="CHEBI:132124"/>
    </reaction>
</comment>
<comment type="subunit">
    <text evidence="1">NDH-1 is composed of 14 different subunits. Subunits NuoA, H, J, K, L, M, N constitute the membrane sector of the complex.</text>
</comment>
<comment type="subcellular location">
    <subcellularLocation>
        <location evidence="1">Cell inner membrane</location>
        <topology evidence="1">Multi-pass membrane protein</topology>
    </subcellularLocation>
</comment>
<comment type="similarity">
    <text evidence="1">Belongs to the complex I subunit 4L family.</text>
</comment>
<name>NUOK_BRUSU</name>
<protein>
    <recommendedName>
        <fullName evidence="1">NADH-quinone oxidoreductase subunit K</fullName>
        <ecNumber evidence="1">7.1.1.-</ecNumber>
    </recommendedName>
    <alternativeName>
        <fullName evidence="1">NADH dehydrogenase I subunit K</fullName>
    </alternativeName>
    <alternativeName>
        <fullName evidence="1">NDH-1 subunit K</fullName>
    </alternativeName>
</protein>
<proteinExistence type="inferred from homology"/>
<accession>Q8G1A7</accession>
<accession>G0K8W0</accession>
<dbReference type="EC" id="7.1.1.-" evidence="1"/>
<dbReference type="EMBL" id="AE014291">
    <property type="protein sequence ID" value="AAN29741.1"/>
    <property type="molecule type" value="Genomic_DNA"/>
</dbReference>
<dbReference type="EMBL" id="CP002997">
    <property type="protein sequence ID" value="AEM18158.1"/>
    <property type="molecule type" value="Genomic_DNA"/>
</dbReference>
<dbReference type="PIR" id="AF3395">
    <property type="entry name" value="AF3395"/>
</dbReference>
<dbReference type="RefSeq" id="WP_002963947.1">
    <property type="nucleotide sequence ID" value="NZ_KN046804.1"/>
</dbReference>
<dbReference type="SMR" id="Q8G1A7"/>
<dbReference type="GeneID" id="97533881"/>
<dbReference type="KEGG" id="bms:BR0812"/>
<dbReference type="KEGG" id="bsi:BS1330_I0808"/>
<dbReference type="PATRIC" id="fig|204722.21.peg.1635"/>
<dbReference type="HOGENOM" id="CLU_144724_2_0_5"/>
<dbReference type="PhylomeDB" id="Q8G1A7"/>
<dbReference type="Proteomes" id="UP000007104">
    <property type="component" value="Chromosome I"/>
</dbReference>
<dbReference type="GO" id="GO:0030964">
    <property type="term" value="C:NADH dehydrogenase complex"/>
    <property type="evidence" value="ECO:0007669"/>
    <property type="project" value="TreeGrafter"/>
</dbReference>
<dbReference type="GO" id="GO:0005886">
    <property type="term" value="C:plasma membrane"/>
    <property type="evidence" value="ECO:0007669"/>
    <property type="project" value="UniProtKB-SubCell"/>
</dbReference>
<dbReference type="GO" id="GO:0050136">
    <property type="term" value="F:NADH:ubiquinone reductase (non-electrogenic) activity"/>
    <property type="evidence" value="ECO:0007669"/>
    <property type="project" value="UniProtKB-UniRule"/>
</dbReference>
<dbReference type="GO" id="GO:0048038">
    <property type="term" value="F:quinone binding"/>
    <property type="evidence" value="ECO:0007669"/>
    <property type="project" value="UniProtKB-KW"/>
</dbReference>
<dbReference type="GO" id="GO:0042773">
    <property type="term" value="P:ATP synthesis coupled electron transport"/>
    <property type="evidence" value="ECO:0007669"/>
    <property type="project" value="InterPro"/>
</dbReference>
<dbReference type="FunFam" id="1.10.287.3510:FF:000001">
    <property type="entry name" value="NADH-quinone oxidoreductase subunit K"/>
    <property type="match status" value="1"/>
</dbReference>
<dbReference type="Gene3D" id="1.10.287.3510">
    <property type="match status" value="1"/>
</dbReference>
<dbReference type="HAMAP" id="MF_01456">
    <property type="entry name" value="NDH1_NuoK"/>
    <property type="match status" value="1"/>
</dbReference>
<dbReference type="InterPro" id="IPR001133">
    <property type="entry name" value="NADH_UbQ_OxRdtase_chain4L/K"/>
</dbReference>
<dbReference type="InterPro" id="IPR039428">
    <property type="entry name" value="NUOK/Mnh_C1-like"/>
</dbReference>
<dbReference type="NCBIfam" id="NF004320">
    <property type="entry name" value="PRK05715.1-2"/>
    <property type="match status" value="1"/>
</dbReference>
<dbReference type="NCBIfam" id="NF004321">
    <property type="entry name" value="PRK05715.1-3"/>
    <property type="match status" value="1"/>
</dbReference>
<dbReference type="NCBIfam" id="NF004323">
    <property type="entry name" value="PRK05715.1-5"/>
    <property type="match status" value="1"/>
</dbReference>
<dbReference type="PANTHER" id="PTHR11434:SF21">
    <property type="entry name" value="NADH DEHYDROGENASE SUBUNIT 4L-RELATED"/>
    <property type="match status" value="1"/>
</dbReference>
<dbReference type="PANTHER" id="PTHR11434">
    <property type="entry name" value="NADH-UBIQUINONE OXIDOREDUCTASE SUBUNIT ND4L"/>
    <property type="match status" value="1"/>
</dbReference>
<dbReference type="Pfam" id="PF00420">
    <property type="entry name" value="Oxidored_q2"/>
    <property type="match status" value="1"/>
</dbReference>
<gene>
    <name evidence="1" type="primary">nuoK</name>
    <name type="ordered locus">BR0812</name>
    <name type="ordered locus">BS1330_I0808</name>
</gene>
<keyword id="KW-0997">Cell inner membrane</keyword>
<keyword id="KW-1003">Cell membrane</keyword>
<keyword id="KW-0472">Membrane</keyword>
<keyword id="KW-0520">NAD</keyword>
<keyword id="KW-0874">Quinone</keyword>
<keyword id="KW-1278">Translocase</keyword>
<keyword id="KW-0812">Transmembrane</keyword>
<keyword id="KW-1133">Transmembrane helix</keyword>
<keyword id="KW-0813">Transport</keyword>
<keyword id="KW-0830">Ubiquinone</keyword>
<feature type="chain" id="PRO_0000389977" description="NADH-quinone oxidoreductase subunit K">
    <location>
        <begin position="1"/>
        <end position="102"/>
    </location>
</feature>
<feature type="transmembrane region" description="Helical" evidence="1">
    <location>
        <begin position="5"/>
        <end position="25"/>
    </location>
</feature>
<feature type="transmembrane region" description="Helical" evidence="1">
    <location>
        <begin position="31"/>
        <end position="51"/>
    </location>
</feature>
<feature type="transmembrane region" description="Helical" evidence="1">
    <location>
        <begin position="66"/>
        <end position="86"/>
    </location>
</feature>